<keyword id="KW-0002">3D-structure</keyword>
<keyword id="KW-0007">Acetylation</keyword>
<keyword id="KW-0903">Direct protein sequencing</keyword>
<keyword id="KW-0249">Electron transport</keyword>
<keyword id="KW-0472">Membrane</keyword>
<keyword id="KW-0496">Mitochondrion</keyword>
<keyword id="KW-0999">Mitochondrion inner membrane</keyword>
<keyword id="KW-1185">Reference proteome</keyword>
<keyword id="KW-0679">Respiratory chain</keyword>
<keyword id="KW-0812">Transmembrane</keyword>
<keyword id="KW-1133">Transmembrane helix</keyword>
<keyword id="KW-0813">Transport</keyword>
<reference key="1">
    <citation type="journal article" date="2002" name="J. Biol. Chem.">
        <title>Definition of the nuclear encoded protein composition of bovine heart mitochondrial complex I. Identification two new subunits.</title>
        <authorList>
            <person name="Carroll J."/>
            <person name="Shannon R.J."/>
            <person name="Fearnley I.M."/>
            <person name="Walker J.E."/>
            <person name="Hirst J."/>
        </authorList>
    </citation>
    <scope>NUCLEOTIDE SEQUENCE [MRNA]</scope>
    <scope>PARTIAL PROTEIN SEQUENCE</scope>
    <scope>ACETYLATION AT ALA-2</scope>
    <source>
        <tissue>Heart</tissue>
    </source>
</reference>
<reference key="2">
    <citation type="submission" date="2005-08" db="EMBL/GenBank/DDBJ databases">
        <authorList>
            <consortium name="NIH - Mammalian Gene Collection (MGC) project"/>
        </authorList>
    </citation>
    <scope>NUCLEOTIDE SEQUENCE [LARGE SCALE MRNA]</scope>
    <source>
        <strain>Hereford</strain>
        <tissue>Hypothalamus</tissue>
    </source>
</reference>
<reference key="3">
    <citation type="journal article" date="2006" name="Proc. Natl. Acad. Sci. U.S.A.">
        <title>Definition of the mitochondrial proteome by measurement of molecular masses of membrane proteins.</title>
        <authorList>
            <person name="Carroll J."/>
            <person name="Fearnley I.M."/>
            <person name="Walker J.E."/>
        </authorList>
    </citation>
    <scope>SUBCELLULAR LOCATION</scope>
    <scope>CLEAVAGE OF INITIATOR METHIONINE</scope>
    <scope>ACETYLATION AT ALA-2</scope>
    <scope>MASS SPECTROMETRY</scope>
</reference>
<evidence type="ECO:0000250" key="1">
    <source>
        <dbReference type="UniProtKB" id="Q86Y39"/>
    </source>
</evidence>
<evidence type="ECO:0000255" key="2"/>
<evidence type="ECO:0000269" key="3">
    <source>
    </source>
</evidence>
<evidence type="ECO:0000269" key="4">
    <source>
    </source>
</evidence>
<evidence type="ECO:0000305" key="5"/>
<evidence type="ECO:0000305" key="6">
    <source>
    </source>
</evidence>
<evidence type="ECO:0007829" key="7">
    <source>
        <dbReference type="PDB" id="7QSM"/>
    </source>
</evidence>
<protein>
    <recommendedName>
        <fullName>NADH dehydrogenase [ubiquinone] 1 alpha subcomplex subunit 11</fullName>
    </recommendedName>
    <alternativeName>
        <fullName>Complex I-B14.7</fullName>
        <shortName>CI-B14.7</shortName>
    </alternativeName>
    <alternativeName>
        <fullName>NADH-ubiquinone oxidoreductase subunit B14.7</fullName>
    </alternativeName>
</protein>
<feature type="initiator methionine" description="Removed" evidence="3 4">
    <location>
        <position position="1"/>
    </location>
</feature>
<feature type="chain" id="PRO_0000118840" description="NADH dehydrogenase [ubiquinone] 1 alpha subcomplex subunit 11">
    <location>
        <begin position="2"/>
        <end position="141"/>
    </location>
</feature>
<feature type="transmembrane region" description="Helical" evidence="2">
    <location>
        <begin position="22"/>
        <end position="43"/>
    </location>
</feature>
<feature type="transmembrane region" description="Helical" evidence="2">
    <location>
        <begin position="58"/>
        <end position="80"/>
    </location>
</feature>
<feature type="modified residue" description="N-acetylalanine" evidence="3 4">
    <location>
        <position position="2"/>
    </location>
</feature>
<feature type="helix" evidence="7">
    <location>
        <begin position="3"/>
        <end position="11"/>
    </location>
</feature>
<feature type="helix" evidence="7">
    <location>
        <begin position="18"/>
        <end position="43"/>
    </location>
</feature>
<feature type="helix" evidence="7">
    <location>
        <begin position="49"/>
        <end position="80"/>
    </location>
</feature>
<feature type="helix" evidence="7">
    <location>
        <begin position="87"/>
        <end position="105"/>
    </location>
</feature>
<feature type="helix" evidence="7">
    <location>
        <begin position="108"/>
        <end position="131"/>
    </location>
</feature>
<name>NDUAB_BOVIN</name>
<dbReference type="EMBL" id="AJ510148">
    <property type="protein sequence ID" value="CAD52867.1"/>
    <property type="molecule type" value="mRNA"/>
</dbReference>
<dbReference type="EMBL" id="BC102976">
    <property type="protein sequence ID" value="AAI02977.1"/>
    <property type="molecule type" value="mRNA"/>
</dbReference>
<dbReference type="RefSeq" id="NP_783649.1">
    <property type="nucleotide sequence ID" value="NM_175718.2"/>
</dbReference>
<dbReference type="PDB" id="5LC5">
    <property type="method" value="EM"/>
    <property type="resolution" value="4.35 A"/>
    <property type="chains" value="Y=2-139"/>
</dbReference>
<dbReference type="PDB" id="5LDW">
    <property type="method" value="EM"/>
    <property type="resolution" value="4.27 A"/>
    <property type="chains" value="Y=1-141"/>
</dbReference>
<dbReference type="PDB" id="5LDX">
    <property type="method" value="EM"/>
    <property type="resolution" value="5.60 A"/>
    <property type="chains" value="Y=2-141"/>
</dbReference>
<dbReference type="PDB" id="5O31">
    <property type="method" value="EM"/>
    <property type="resolution" value="4.13 A"/>
    <property type="chains" value="Y=1-141"/>
</dbReference>
<dbReference type="PDB" id="7DGQ">
    <property type="method" value="EM"/>
    <property type="resolution" value="5.00 A"/>
    <property type="chains" value="T=2-141"/>
</dbReference>
<dbReference type="PDB" id="7DGR">
    <property type="method" value="EM"/>
    <property type="resolution" value="4.60 A"/>
    <property type="chains" value="T=2-141"/>
</dbReference>
<dbReference type="PDB" id="7DGS">
    <property type="method" value="EM"/>
    <property type="resolution" value="7.80 A"/>
    <property type="chains" value="T=2-141"/>
</dbReference>
<dbReference type="PDB" id="7DGZ">
    <property type="method" value="EM"/>
    <property type="resolution" value="3.80 A"/>
    <property type="chains" value="T=2-141"/>
</dbReference>
<dbReference type="PDB" id="7DH0">
    <property type="method" value="EM"/>
    <property type="resolution" value="4.20 A"/>
    <property type="chains" value="T=2-141"/>
</dbReference>
<dbReference type="PDB" id="7DKF">
    <property type="method" value="EM"/>
    <property type="resolution" value="8.30 A"/>
    <property type="chains" value="T2=2-141"/>
</dbReference>
<dbReference type="PDB" id="7QSD">
    <property type="method" value="EM"/>
    <property type="resolution" value="3.10 A"/>
    <property type="chains" value="Y=1-141"/>
</dbReference>
<dbReference type="PDB" id="7QSK">
    <property type="method" value="EM"/>
    <property type="resolution" value="2.84 A"/>
    <property type="chains" value="Y=1-141"/>
</dbReference>
<dbReference type="PDB" id="7QSL">
    <property type="method" value="EM"/>
    <property type="resolution" value="2.76 A"/>
    <property type="chains" value="Y=1-141"/>
</dbReference>
<dbReference type="PDB" id="7QSM">
    <property type="method" value="EM"/>
    <property type="resolution" value="2.30 A"/>
    <property type="chains" value="Y=1-141"/>
</dbReference>
<dbReference type="PDB" id="7QSN">
    <property type="method" value="EM"/>
    <property type="resolution" value="2.81 A"/>
    <property type="chains" value="Y=1-141"/>
</dbReference>
<dbReference type="PDB" id="7QSO">
    <property type="method" value="EM"/>
    <property type="resolution" value="3.02 A"/>
    <property type="chains" value="Y=1-141"/>
</dbReference>
<dbReference type="PDB" id="7R41">
    <property type="method" value="EM"/>
    <property type="resolution" value="2.30 A"/>
    <property type="chains" value="Y=1-141"/>
</dbReference>
<dbReference type="PDB" id="7R42">
    <property type="method" value="EM"/>
    <property type="resolution" value="2.30 A"/>
    <property type="chains" value="Y=1-141"/>
</dbReference>
<dbReference type="PDB" id="7R43">
    <property type="method" value="EM"/>
    <property type="resolution" value="2.40 A"/>
    <property type="chains" value="Y=1-141"/>
</dbReference>
<dbReference type="PDB" id="7R44">
    <property type="method" value="EM"/>
    <property type="resolution" value="2.40 A"/>
    <property type="chains" value="Y=1-141"/>
</dbReference>
<dbReference type="PDB" id="7R45">
    <property type="method" value="EM"/>
    <property type="resolution" value="2.40 A"/>
    <property type="chains" value="Y=1-141"/>
</dbReference>
<dbReference type="PDB" id="7R46">
    <property type="method" value="EM"/>
    <property type="resolution" value="2.40 A"/>
    <property type="chains" value="Y=1-141"/>
</dbReference>
<dbReference type="PDB" id="7R47">
    <property type="method" value="EM"/>
    <property type="resolution" value="2.30 A"/>
    <property type="chains" value="Y=1-141"/>
</dbReference>
<dbReference type="PDB" id="7R48">
    <property type="method" value="EM"/>
    <property type="resolution" value="2.30 A"/>
    <property type="chains" value="Y=1-141"/>
</dbReference>
<dbReference type="PDB" id="7R4C">
    <property type="method" value="EM"/>
    <property type="resolution" value="2.30 A"/>
    <property type="chains" value="Y=1-141"/>
</dbReference>
<dbReference type="PDB" id="7R4D">
    <property type="method" value="EM"/>
    <property type="resolution" value="2.30 A"/>
    <property type="chains" value="Y=1-141"/>
</dbReference>
<dbReference type="PDB" id="7R4F">
    <property type="method" value="EM"/>
    <property type="resolution" value="2.40 A"/>
    <property type="chains" value="Y=1-141"/>
</dbReference>
<dbReference type="PDB" id="7R4G">
    <property type="method" value="EM"/>
    <property type="resolution" value="2.50 A"/>
    <property type="chains" value="Y=1-141"/>
</dbReference>
<dbReference type="PDB" id="8Q0A">
    <property type="method" value="EM"/>
    <property type="resolution" value="3.10 A"/>
    <property type="chains" value="Y=1-141"/>
</dbReference>
<dbReference type="PDB" id="8Q0F">
    <property type="method" value="EM"/>
    <property type="resolution" value="3.10 A"/>
    <property type="chains" value="Y=1-141"/>
</dbReference>
<dbReference type="PDB" id="8Q0J">
    <property type="method" value="EM"/>
    <property type="resolution" value="3.80 A"/>
    <property type="chains" value="Y=1-141"/>
</dbReference>
<dbReference type="PDB" id="8Q0M">
    <property type="method" value="EM"/>
    <property type="resolution" value="3.10 A"/>
    <property type="chains" value="Y=1-141"/>
</dbReference>
<dbReference type="PDB" id="8Q0O">
    <property type="method" value="EM"/>
    <property type="resolution" value="3.10 A"/>
    <property type="chains" value="Y=1-141"/>
</dbReference>
<dbReference type="PDB" id="8Q0Q">
    <property type="method" value="EM"/>
    <property type="resolution" value="3.60 A"/>
    <property type="chains" value="Y=1-141"/>
</dbReference>
<dbReference type="PDB" id="8Q1P">
    <property type="method" value="EM"/>
    <property type="resolution" value="2.90 A"/>
    <property type="chains" value="Y=1-141"/>
</dbReference>
<dbReference type="PDB" id="8Q1U">
    <property type="method" value="EM"/>
    <property type="resolution" value="3.30 A"/>
    <property type="chains" value="Y=1-141"/>
</dbReference>
<dbReference type="PDB" id="8Q1Y">
    <property type="method" value="EM"/>
    <property type="resolution" value="2.60 A"/>
    <property type="chains" value="Y=1-141"/>
</dbReference>
<dbReference type="PDB" id="8Q25">
    <property type="method" value="EM"/>
    <property type="resolution" value="2.80 A"/>
    <property type="chains" value="Y=1-141"/>
</dbReference>
<dbReference type="PDB" id="8Q45">
    <property type="method" value="EM"/>
    <property type="resolution" value="2.70 A"/>
    <property type="chains" value="Y=1-141"/>
</dbReference>
<dbReference type="PDB" id="8Q46">
    <property type="method" value="EM"/>
    <property type="resolution" value="2.60 A"/>
    <property type="chains" value="Y=1-141"/>
</dbReference>
<dbReference type="PDB" id="8Q47">
    <property type="method" value="EM"/>
    <property type="resolution" value="2.90 A"/>
    <property type="chains" value="Y=1-141"/>
</dbReference>
<dbReference type="PDB" id="8Q48">
    <property type="method" value="EM"/>
    <property type="resolution" value="2.50 A"/>
    <property type="chains" value="Y=1-141"/>
</dbReference>
<dbReference type="PDB" id="8Q49">
    <property type="method" value="EM"/>
    <property type="resolution" value="2.60 A"/>
    <property type="chains" value="Y=1-141"/>
</dbReference>
<dbReference type="PDB" id="8Q4A">
    <property type="method" value="EM"/>
    <property type="resolution" value="2.60 A"/>
    <property type="chains" value="Y=1-141"/>
</dbReference>
<dbReference type="PDBsum" id="5LC5"/>
<dbReference type="PDBsum" id="5LDW"/>
<dbReference type="PDBsum" id="5LDX"/>
<dbReference type="PDBsum" id="5O31"/>
<dbReference type="PDBsum" id="7DGQ"/>
<dbReference type="PDBsum" id="7DGR"/>
<dbReference type="PDBsum" id="7DGS"/>
<dbReference type="PDBsum" id="7DGZ"/>
<dbReference type="PDBsum" id="7DH0"/>
<dbReference type="PDBsum" id="7DKF"/>
<dbReference type="PDBsum" id="7QSD"/>
<dbReference type="PDBsum" id="7QSK"/>
<dbReference type="PDBsum" id="7QSL"/>
<dbReference type="PDBsum" id="7QSM"/>
<dbReference type="PDBsum" id="7QSN"/>
<dbReference type="PDBsum" id="7QSO"/>
<dbReference type="PDBsum" id="7R41"/>
<dbReference type="PDBsum" id="7R42"/>
<dbReference type="PDBsum" id="7R43"/>
<dbReference type="PDBsum" id="7R44"/>
<dbReference type="PDBsum" id="7R45"/>
<dbReference type="PDBsum" id="7R46"/>
<dbReference type="PDBsum" id="7R47"/>
<dbReference type="PDBsum" id="7R48"/>
<dbReference type="PDBsum" id="7R4C"/>
<dbReference type="PDBsum" id="7R4D"/>
<dbReference type="PDBsum" id="7R4F"/>
<dbReference type="PDBsum" id="7R4G"/>
<dbReference type="PDBsum" id="8Q0A"/>
<dbReference type="PDBsum" id="8Q0F"/>
<dbReference type="PDBsum" id="8Q0J"/>
<dbReference type="PDBsum" id="8Q0M"/>
<dbReference type="PDBsum" id="8Q0O"/>
<dbReference type="PDBsum" id="8Q0Q"/>
<dbReference type="PDBsum" id="8Q1P"/>
<dbReference type="PDBsum" id="8Q1U"/>
<dbReference type="PDBsum" id="8Q1Y"/>
<dbReference type="PDBsum" id="8Q25"/>
<dbReference type="PDBsum" id="8Q45"/>
<dbReference type="PDBsum" id="8Q46"/>
<dbReference type="PDBsum" id="8Q47"/>
<dbReference type="PDBsum" id="8Q48"/>
<dbReference type="PDBsum" id="8Q49"/>
<dbReference type="PDBsum" id="8Q4A"/>
<dbReference type="EMDB" id="EMD-14127"/>
<dbReference type="EMDB" id="EMD-14132"/>
<dbReference type="EMDB" id="EMD-14133"/>
<dbReference type="EMDB" id="EMD-14134"/>
<dbReference type="EMDB" id="EMD-14139"/>
<dbReference type="EMDB" id="EMD-14140"/>
<dbReference type="EMDB" id="EMD-14251"/>
<dbReference type="EMDB" id="EMD-14256"/>
<dbReference type="EMDB" id="EMD-14261"/>
<dbReference type="EMDB" id="EMD-14266"/>
<dbReference type="EMDB" id="EMD-14272"/>
<dbReference type="EMDB" id="EMD-14277"/>
<dbReference type="EMDB" id="EMD-14282"/>
<dbReference type="EMDB" id="EMD-14287"/>
<dbReference type="EMDB" id="EMD-14292"/>
<dbReference type="EMDB" id="EMD-14297"/>
<dbReference type="EMDB" id="EMD-14302"/>
<dbReference type="EMDB" id="EMD-14307"/>
<dbReference type="EMDB" id="EMD-18051"/>
<dbReference type="EMDB" id="EMD-18052"/>
<dbReference type="EMDB" id="EMD-18054"/>
<dbReference type="EMDB" id="EMD-18055"/>
<dbReference type="EMDB" id="EMD-18057"/>
<dbReference type="EMDB" id="EMD-18059"/>
<dbReference type="EMDB" id="EMD-18066"/>
<dbReference type="EMDB" id="EMD-18067"/>
<dbReference type="EMDB" id="EMD-18068"/>
<dbReference type="EMDB" id="EMD-18069"/>
<dbReference type="EMDB" id="EMD-18138"/>
<dbReference type="EMDB" id="EMD-18139"/>
<dbReference type="EMDB" id="EMD-18140"/>
<dbReference type="EMDB" id="EMD-18141"/>
<dbReference type="EMDB" id="EMD-18142"/>
<dbReference type="EMDB" id="EMD-18143"/>
<dbReference type="EMDB" id="EMD-30673"/>
<dbReference type="EMDB" id="EMD-30674"/>
<dbReference type="EMDB" id="EMD-30675"/>
<dbReference type="EMDB" id="EMD-30676"/>
<dbReference type="EMDB" id="EMD-30677"/>
<dbReference type="EMDB" id="EMD-30706"/>
<dbReference type="EMDB" id="EMD-3731"/>
<dbReference type="EMDB" id="EMD-4032"/>
<dbReference type="EMDB" id="EMD-4040"/>
<dbReference type="EMDB" id="EMD-4041"/>
<dbReference type="SMR" id="Q8HXG6"/>
<dbReference type="CORUM" id="Q8HXG6"/>
<dbReference type="DIP" id="DIP-38796N"/>
<dbReference type="FunCoup" id="Q8HXG6">
    <property type="interactions" value="1263"/>
</dbReference>
<dbReference type="IntAct" id="Q8HXG6">
    <property type="interactions" value="2"/>
</dbReference>
<dbReference type="STRING" id="9913.ENSBTAP00000025322"/>
<dbReference type="BindingDB" id="Q8HXG6"/>
<dbReference type="ChEMBL" id="CHEMBL2503"/>
<dbReference type="TCDB" id="3.D.1.6.1">
    <property type="family name" value="the h+ or na+-translocating nadh dehydrogenase (ndh) family"/>
</dbReference>
<dbReference type="iPTMnet" id="Q8HXG6"/>
<dbReference type="PaxDb" id="9913-ENSBTAP00000025322"/>
<dbReference type="GeneID" id="326346"/>
<dbReference type="KEGG" id="bta:326346"/>
<dbReference type="CTD" id="126328"/>
<dbReference type="VEuPathDB" id="HostDB:ENSBTAG00000019025"/>
<dbReference type="eggNOG" id="ENOG502S6F6">
    <property type="taxonomic scope" value="Eukaryota"/>
</dbReference>
<dbReference type="HOGENOM" id="CLU_134185_2_0_1"/>
<dbReference type="InParanoid" id="Q8HXG6"/>
<dbReference type="OMA" id="SIEQGWE"/>
<dbReference type="OrthoDB" id="1913277at2759"/>
<dbReference type="TreeFam" id="TF314729"/>
<dbReference type="Reactome" id="R-BTA-611105">
    <property type="pathway name" value="Respiratory electron transport"/>
</dbReference>
<dbReference type="Reactome" id="R-BTA-6799198">
    <property type="pathway name" value="Complex I biogenesis"/>
</dbReference>
<dbReference type="Proteomes" id="UP000009136">
    <property type="component" value="Chromosome 7"/>
</dbReference>
<dbReference type="Bgee" id="ENSBTAG00000019025">
    <property type="expression patterns" value="Expressed in tongue muscle and 107 other cell types or tissues"/>
</dbReference>
<dbReference type="GO" id="GO:0005743">
    <property type="term" value="C:mitochondrial inner membrane"/>
    <property type="evidence" value="ECO:0007669"/>
    <property type="project" value="UniProtKB-SubCell"/>
</dbReference>
<dbReference type="GO" id="GO:0005739">
    <property type="term" value="C:mitochondrion"/>
    <property type="evidence" value="ECO:0000250"/>
    <property type="project" value="UniProtKB"/>
</dbReference>
<dbReference type="GO" id="GO:0045271">
    <property type="term" value="C:respiratory chain complex I"/>
    <property type="evidence" value="ECO:0000250"/>
    <property type="project" value="UniProtKB"/>
</dbReference>
<dbReference type="GO" id="GO:0006120">
    <property type="term" value="P:mitochondrial electron transport, NADH to ubiquinone"/>
    <property type="evidence" value="ECO:0007669"/>
    <property type="project" value="InterPro"/>
</dbReference>
<dbReference type="InterPro" id="IPR039205">
    <property type="entry name" value="NDUFA11"/>
</dbReference>
<dbReference type="PANTHER" id="PTHR21382:SF1">
    <property type="entry name" value="NADH DEHYDROGENASE [UBIQUINONE] 1 ALPHA SUBCOMPLEX SUBUNIT 11"/>
    <property type="match status" value="1"/>
</dbReference>
<dbReference type="PANTHER" id="PTHR21382">
    <property type="entry name" value="NADH-UBIQUINONE OXIDOREDUCTASE SUBUNIT"/>
    <property type="match status" value="1"/>
</dbReference>
<dbReference type="Pfam" id="PF02466">
    <property type="entry name" value="Tim17"/>
    <property type="match status" value="1"/>
</dbReference>
<accession>Q8HXG6</accession>
<accession>Q3ZC19</accession>
<gene>
    <name type="primary">NDUFA11</name>
</gene>
<proteinExistence type="evidence at protein level"/>
<sequence>MAKTVLRQYWDIPEGTECHRKTYATTSIGGAAGLVVSAYSVALKTPTSFLEGVARTGRYTFTAAAIGAIFGLTSCISAQVREKPDDPLNYLIGGCAGGLILGARTRSYGIGAAACAYMGLTAALVKMGQLEGWQVFAEPKV</sequence>
<organism>
    <name type="scientific">Bos taurus</name>
    <name type="common">Bovine</name>
    <dbReference type="NCBI Taxonomy" id="9913"/>
    <lineage>
        <taxon>Eukaryota</taxon>
        <taxon>Metazoa</taxon>
        <taxon>Chordata</taxon>
        <taxon>Craniata</taxon>
        <taxon>Vertebrata</taxon>
        <taxon>Euteleostomi</taxon>
        <taxon>Mammalia</taxon>
        <taxon>Eutheria</taxon>
        <taxon>Laurasiatheria</taxon>
        <taxon>Artiodactyla</taxon>
        <taxon>Ruminantia</taxon>
        <taxon>Pecora</taxon>
        <taxon>Bovidae</taxon>
        <taxon>Bovinae</taxon>
        <taxon>Bos</taxon>
    </lineage>
</organism>
<comment type="function">
    <text evidence="1">Accessory subunit of the mitochondrial membrane respiratory chain NADH dehydrogenase (Complex I), that is believed not to be involved in catalysis. Complex I functions in the transfer of electrons from NADH to the respiratory chain. The immediate electron acceptor for the enzyme is believed to be ubiquinone.</text>
</comment>
<comment type="subunit">
    <text evidence="3">Complex I is composed of 45 different subunits.</text>
</comment>
<comment type="subcellular location">
    <subcellularLocation>
        <location evidence="6">Mitochondrion inner membrane</location>
        <topology evidence="2">Multi-pass membrane protein</topology>
        <orientation evidence="5">Matrix side</orientation>
    </subcellularLocation>
</comment>
<comment type="mass spectrometry"/>
<comment type="similarity">
    <text evidence="5">Belongs to the complex I NDUFA11 subunit family.</text>
</comment>